<dbReference type="EC" id="5.3.1.1" evidence="1"/>
<dbReference type="EMBL" id="CP000077">
    <property type="protein sequence ID" value="AAY79541.1"/>
    <property type="molecule type" value="Genomic_DNA"/>
</dbReference>
<dbReference type="RefSeq" id="WP_011277042.1">
    <property type="nucleotide sequence ID" value="NC_007181.1"/>
</dbReference>
<dbReference type="SMR" id="Q4JCD8"/>
<dbReference type="STRING" id="330779.Saci_0117"/>
<dbReference type="GeneID" id="14550647"/>
<dbReference type="GeneID" id="78440471"/>
<dbReference type="KEGG" id="sai:Saci_0117"/>
<dbReference type="PATRIC" id="fig|330779.12.peg.109"/>
<dbReference type="eggNOG" id="arCOG01087">
    <property type="taxonomic scope" value="Archaea"/>
</dbReference>
<dbReference type="HOGENOM" id="CLU_104921_0_0_2"/>
<dbReference type="UniPathway" id="UPA00109">
    <property type="reaction ID" value="UER00189"/>
</dbReference>
<dbReference type="UniPathway" id="UPA00138"/>
<dbReference type="Proteomes" id="UP000001018">
    <property type="component" value="Chromosome"/>
</dbReference>
<dbReference type="GO" id="GO:0005829">
    <property type="term" value="C:cytosol"/>
    <property type="evidence" value="ECO:0007669"/>
    <property type="project" value="TreeGrafter"/>
</dbReference>
<dbReference type="GO" id="GO:0004807">
    <property type="term" value="F:triose-phosphate isomerase activity"/>
    <property type="evidence" value="ECO:0007669"/>
    <property type="project" value="UniProtKB-UniRule"/>
</dbReference>
<dbReference type="GO" id="GO:0006094">
    <property type="term" value="P:gluconeogenesis"/>
    <property type="evidence" value="ECO:0007669"/>
    <property type="project" value="UniProtKB-UniRule"/>
</dbReference>
<dbReference type="GO" id="GO:0046166">
    <property type="term" value="P:glyceraldehyde-3-phosphate biosynthetic process"/>
    <property type="evidence" value="ECO:0007669"/>
    <property type="project" value="TreeGrafter"/>
</dbReference>
<dbReference type="GO" id="GO:0019563">
    <property type="term" value="P:glycerol catabolic process"/>
    <property type="evidence" value="ECO:0007669"/>
    <property type="project" value="TreeGrafter"/>
</dbReference>
<dbReference type="GO" id="GO:0006096">
    <property type="term" value="P:glycolytic process"/>
    <property type="evidence" value="ECO:0007669"/>
    <property type="project" value="UniProtKB-UniRule"/>
</dbReference>
<dbReference type="CDD" id="cd00311">
    <property type="entry name" value="TIM"/>
    <property type="match status" value="1"/>
</dbReference>
<dbReference type="FunFam" id="3.20.20.70:FF:000223">
    <property type="entry name" value="Triosephosphate isomerase"/>
    <property type="match status" value="1"/>
</dbReference>
<dbReference type="Gene3D" id="3.20.20.70">
    <property type="entry name" value="Aldolase class I"/>
    <property type="match status" value="1"/>
</dbReference>
<dbReference type="HAMAP" id="MF_00147_A">
    <property type="entry name" value="TIM_A"/>
    <property type="match status" value="1"/>
</dbReference>
<dbReference type="InterPro" id="IPR013785">
    <property type="entry name" value="Aldolase_TIM"/>
</dbReference>
<dbReference type="InterPro" id="IPR035990">
    <property type="entry name" value="TIM_sf"/>
</dbReference>
<dbReference type="InterPro" id="IPR000652">
    <property type="entry name" value="Triosephosphate_isomerase"/>
</dbReference>
<dbReference type="InterPro" id="IPR022891">
    <property type="entry name" value="Triosephosphate_isomerase_arc"/>
</dbReference>
<dbReference type="NCBIfam" id="NF003302">
    <property type="entry name" value="PRK04302.1"/>
    <property type="match status" value="1"/>
</dbReference>
<dbReference type="NCBIfam" id="TIGR00419">
    <property type="entry name" value="tim"/>
    <property type="match status" value="1"/>
</dbReference>
<dbReference type="PANTHER" id="PTHR21139">
    <property type="entry name" value="TRIOSEPHOSPHATE ISOMERASE"/>
    <property type="match status" value="1"/>
</dbReference>
<dbReference type="PANTHER" id="PTHR21139:SF42">
    <property type="entry name" value="TRIOSEPHOSPHATE ISOMERASE"/>
    <property type="match status" value="1"/>
</dbReference>
<dbReference type="Pfam" id="PF00121">
    <property type="entry name" value="TIM"/>
    <property type="match status" value="1"/>
</dbReference>
<dbReference type="SUPFAM" id="SSF51351">
    <property type="entry name" value="Triosephosphate isomerase (TIM)"/>
    <property type="match status" value="1"/>
</dbReference>
<dbReference type="PROSITE" id="PS51440">
    <property type="entry name" value="TIM_2"/>
    <property type="match status" value="1"/>
</dbReference>
<gene>
    <name evidence="1" type="primary">tpiA</name>
    <name type="ordered locus">Saci_0117</name>
</gene>
<sequence>MKPPVILINYKAYENSYGKKSIEITKKIEKVSKEYGTEIIVSVPATMIHRISEESELTVFAQHVDSGEQGARTGAILPEMIKDAGARGSLLNHSERRIRLDEMAESLERIRVLNLESVVCVDRYELVLPVALLRPNAVLIEPPELIGTGIPVSKAKPEAITKAVEEIKKTKDVYLLAGAGITTGEDVFKAIELGADGIGAASAVMKAKEPEKVVEDFVKNAIKAMEKRGE</sequence>
<evidence type="ECO:0000255" key="1">
    <source>
        <dbReference type="HAMAP-Rule" id="MF_00147"/>
    </source>
</evidence>
<name>TPIS_SULAC</name>
<reference key="1">
    <citation type="journal article" date="2005" name="J. Bacteriol.">
        <title>The genome of Sulfolobus acidocaldarius, a model organism of the Crenarchaeota.</title>
        <authorList>
            <person name="Chen L."/>
            <person name="Bruegger K."/>
            <person name="Skovgaard M."/>
            <person name="Redder P."/>
            <person name="She Q."/>
            <person name="Torarinsson E."/>
            <person name="Greve B."/>
            <person name="Awayez M."/>
            <person name="Zibat A."/>
            <person name="Klenk H.-P."/>
            <person name="Garrett R.A."/>
        </authorList>
    </citation>
    <scope>NUCLEOTIDE SEQUENCE [LARGE SCALE GENOMIC DNA]</scope>
    <source>
        <strain>ATCC 33909 / DSM 639 / JCM 8929 / NBRC 15157 / NCIMB 11770</strain>
    </source>
</reference>
<protein>
    <recommendedName>
        <fullName evidence="1">Triosephosphate isomerase</fullName>
        <shortName evidence="1">TIM</shortName>
        <shortName evidence="1">TPI</shortName>
        <ecNumber evidence="1">5.3.1.1</ecNumber>
    </recommendedName>
    <alternativeName>
        <fullName evidence="1">Triose-phosphate isomerase</fullName>
    </alternativeName>
</protein>
<keyword id="KW-0963">Cytoplasm</keyword>
<keyword id="KW-0312">Gluconeogenesis</keyword>
<keyword id="KW-0324">Glycolysis</keyword>
<keyword id="KW-0413">Isomerase</keyword>
<keyword id="KW-1185">Reference proteome</keyword>
<accession>Q4JCD8</accession>
<proteinExistence type="inferred from homology"/>
<comment type="function">
    <text evidence="1">Involved in the gluconeogenesis. Catalyzes stereospecifically the conversion of dihydroxyacetone phosphate (DHAP) to D-glyceraldehyde-3-phosphate (G3P).</text>
</comment>
<comment type="catalytic activity">
    <reaction evidence="1">
        <text>D-glyceraldehyde 3-phosphate = dihydroxyacetone phosphate</text>
        <dbReference type="Rhea" id="RHEA:18585"/>
        <dbReference type="ChEBI" id="CHEBI:57642"/>
        <dbReference type="ChEBI" id="CHEBI:59776"/>
        <dbReference type="EC" id="5.3.1.1"/>
    </reaction>
</comment>
<comment type="pathway">
    <text evidence="1">Carbohydrate biosynthesis; gluconeogenesis.</text>
</comment>
<comment type="pathway">
    <text evidence="1">Carbohydrate degradation; glycolysis; D-glyceraldehyde 3-phosphate from glycerone phosphate: step 1/1.</text>
</comment>
<comment type="subunit">
    <text evidence="1">Homotetramer; dimer of dimers.</text>
</comment>
<comment type="subcellular location">
    <subcellularLocation>
        <location evidence="1">Cytoplasm</location>
    </subcellularLocation>
</comment>
<comment type="similarity">
    <text evidence="1">Belongs to the triosephosphate isomerase family.</text>
</comment>
<feature type="chain" id="PRO_0000090345" description="Triosephosphate isomerase">
    <location>
        <begin position="1"/>
        <end position="230"/>
    </location>
</feature>
<feature type="active site" description="Electrophile" evidence="1">
    <location>
        <position position="93"/>
    </location>
</feature>
<feature type="active site" description="Proton acceptor" evidence="1">
    <location>
        <position position="141"/>
    </location>
</feature>
<feature type="binding site" evidence="1">
    <location>
        <begin position="9"/>
        <end position="11"/>
    </location>
    <ligand>
        <name>substrate</name>
    </ligand>
</feature>
<feature type="binding site" evidence="1">
    <location>
        <position position="146"/>
    </location>
    <ligand>
        <name>substrate</name>
    </ligand>
</feature>
<feature type="binding site" evidence="1">
    <location>
        <position position="180"/>
    </location>
    <ligand>
        <name>substrate</name>
    </ligand>
</feature>
<feature type="binding site" evidence="1">
    <location>
        <begin position="201"/>
        <end position="202"/>
    </location>
    <ligand>
        <name>substrate</name>
    </ligand>
</feature>
<organism>
    <name type="scientific">Sulfolobus acidocaldarius (strain ATCC 33909 / DSM 639 / JCM 8929 / NBRC 15157 / NCIMB 11770)</name>
    <dbReference type="NCBI Taxonomy" id="330779"/>
    <lineage>
        <taxon>Archaea</taxon>
        <taxon>Thermoproteota</taxon>
        <taxon>Thermoprotei</taxon>
        <taxon>Sulfolobales</taxon>
        <taxon>Sulfolobaceae</taxon>
        <taxon>Sulfolobus</taxon>
    </lineage>
</organism>